<sequence length="261" mass="29727">MAVGKNKRISKGKKGGKKKAADPYAKKDWYDIKAPSVFDIKNVGKTLVTRTQGTKIASEGLKHRVFEVSLADLQKDEDQSFRKIRLRAEDVQGKNVLTNFWGMDFTTDKLRSLVKKWQTLIEAHVDVKTTDSYTLRMFCIAFTKKRPNQQKRTCYAQSSQIRQIRRKMVEIMRNQASSCDLKELVAKFIPESIGREIEKATSSIFPLQNVYIRKVKILKAPKFDIGKLMEVHGDYSEDVGVKLDRPADETVAEAEPEIPGA</sequence>
<feature type="initiator methionine" description="Removed" evidence="1">
    <location>
        <position position="1"/>
    </location>
</feature>
<feature type="chain" id="PRO_0000389330" description="Small ribosomal subunit protein eS1">
    <location>
        <begin position="2"/>
        <end position="261"/>
    </location>
</feature>
<feature type="region of interest" description="Disordered" evidence="2">
    <location>
        <begin position="1"/>
        <end position="23"/>
    </location>
</feature>
<feature type="compositionally biased region" description="Basic residues" evidence="2">
    <location>
        <begin position="1"/>
        <end position="18"/>
    </location>
</feature>
<organism>
    <name type="scientific">Nicotiana tabacum</name>
    <name type="common">Common tobacco</name>
    <dbReference type="NCBI Taxonomy" id="4097"/>
    <lineage>
        <taxon>Eukaryota</taxon>
        <taxon>Viridiplantae</taxon>
        <taxon>Streptophyta</taxon>
        <taxon>Embryophyta</taxon>
        <taxon>Tracheophyta</taxon>
        <taxon>Spermatophyta</taxon>
        <taxon>Magnoliopsida</taxon>
        <taxon>eudicotyledons</taxon>
        <taxon>Gunneridae</taxon>
        <taxon>Pentapetalae</taxon>
        <taxon>asterids</taxon>
        <taxon>lamiids</taxon>
        <taxon>Solanales</taxon>
        <taxon>Solanaceae</taxon>
        <taxon>Nicotianoideae</taxon>
        <taxon>Nicotianeae</taxon>
        <taxon>Nicotiana</taxon>
    </lineage>
</organism>
<name>RS3A_TOBAC</name>
<proteinExistence type="evidence at protein level"/>
<gene>
    <name type="primary">cyc07</name>
</gene>
<reference key="1">
    <citation type="submission" date="2005-08" db="EMBL/GenBank/DDBJ databases">
        <title>Cloning and characterization of tobacco Ntcyc07 gene.</title>
        <authorList>
            <person name="Hwang S."/>
        </authorList>
    </citation>
    <scope>NUCLEOTIDE SEQUENCE [MRNA]</scope>
</reference>
<accession>Q285L8</accession>
<keyword id="KW-0002">3D-structure</keyword>
<keyword id="KW-0963">Cytoplasm</keyword>
<keyword id="KW-1185">Reference proteome</keyword>
<keyword id="KW-0687">Ribonucleoprotein</keyword>
<keyword id="KW-0689">Ribosomal protein</keyword>
<evidence type="ECO:0000255" key="1">
    <source>
        <dbReference type="HAMAP-Rule" id="MF_03122"/>
    </source>
</evidence>
<evidence type="ECO:0000256" key="2">
    <source>
        <dbReference type="SAM" id="MobiDB-lite"/>
    </source>
</evidence>
<evidence type="ECO:0000305" key="3"/>
<comment type="subunit">
    <text evidence="1">Component of the small ribosomal subunit. Mature ribosomes consist of a small (40S) and a large (60S) subunit. The 40S subunit contains about 33 different proteins and 1 molecule of RNA (18S). The 60S subunit contains about 49 different proteins and 3 molecules of RNA (25S, 5.8S and 5S).</text>
</comment>
<comment type="subcellular location">
    <subcellularLocation>
        <location evidence="1">Cytoplasm</location>
    </subcellularLocation>
</comment>
<comment type="similarity">
    <text evidence="1">Belongs to the eukaryotic ribosomal protein eS1 family.</text>
</comment>
<dbReference type="EMBL" id="DQ164221">
    <property type="protein sequence ID" value="ABA41527.1"/>
    <property type="molecule type" value="mRNA"/>
</dbReference>
<dbReference type="RefSeq" id="NP_001312517.1">
    <property type="nucleotide sequence ID" value="NM_001325588.1"/>
</dbReference>
<dbReference type="PDB" id="8AUV">
    <property type="method" value="EM"/>
    <property type="resolution" value="2.38 A"/>
    <property type="chains" value="F=1-261"/>
</dbReference>
<dbReference type="PDB" id="8B2L">
    <property type="method" value="EM"/>
    <property type="resolution" value="2.20 A"/>
    <property type="chains" value="F1=1-261"/>
</dbReference>
<dbReference type="PDBsum" id="8AUV"/>
<dbReference type="PDBsum" id="8B2L"/>
<dbReference type="EMDB" id="EMD-15674"/>
<dbReference type="EMDB" id="EMD-15806"/>
<dbReference type="SMR" id="Q285L8"/>
<dbReference type="STRING" id="4097.Q285L8"/>
<dbReference type="PaxDb" id="4097-Q285L8"/>
<dbReference type="ProMEX" id="Q285L8"/>
<dbReference type="GeneID" id="107794621"/>
<dbReference type="KEGG" id="nta:107794621"/>
<dbReference type="OMA" id="KEVHWER"/>
<dbReference type="OrthoDB" id="1222853at2759"/>
<dbReference type="PhylomeDB" id="Q285L8"/>
<dbReference type="Proteomes" id="UP000084051">
    <property type="component" value="Unplaced"/>
</dbReference>
<dbReference type="GO" id="GO:0005829">
    <property type="term" value="C:cytosol"/>
    <property type="evidence" value="ECO:0000318"/>
    <property type="project" value="GO_Central"/>
</dbReference>
<dbReference type="GO" id="GO:0022627">
    <property type="term" value="C:cytosolic small ribosomal subunit"/>
    <property type="evidence" value="ECO:0007669"/>
    <property type="project" value="UniProtKB-UniRule"/>
</dbReference>
<dbReference type="GO" id="GO:0003735">
    <property type="term" value="F:structural constituent of ribosome"/>
    <property type="evidence" value="ECO:0007669"/>
    <property type="project" value="UniProtKB-UniRule"/>
</dbReference>
<dbReference type="GO" id="GO:0006412">
    <property type="term" value="P:translation"/>
    <property type="evidence" value="ECO:0007669"/>
    <property type="project" value="UniProtKB-UniRule"/>
</dbReference>
<dbReference type="HAMAP" id="MF_03122">
    <property type="entry name" value="Ribosomal_eS1_euk"/>
    <property type="match status" value="1"/>
</dbReference>
<dbReference type="InterPro" id="IPR001593">
    <property type="entry name" value="Ribosomal_eS1"/>
</dbReference>
<dbReference type="InterPro" id="IPR018281">
    <property type="entry name" value="Ribosomal_eS1_CS"/>
</dbReference>
<dbReference type="InterPro" id="IPR027500">
    <property type="entry name" value="Ribosomal_eS1_euk"/>
</dbReference>
<dbReference type="PANTHER" id="PTHR11830">
    <property type="entry name" value="40S RIBOSOMAL PROTEIN S3A"/>
    <property type="match status" value="1"/>
</dbReference>
<dbReference type="Pfam" id="PF01015">
    <property type="entry name" value="Ribosomal_S3Ae"/>
    <property type="match status" value="1"/>
</dbReference>
<dbReference type="SMART" id="SM01397">
    <property type="entry name" value="Ribosomal_S3Ae"/>
    <property type="match status" value="1"/>
</dbReference>
<dbReference type="PROSITE" id="PS01191">
    <property type="entry name" value="RIBOSOMAL_S3AE"/>
    <property type="match status" value="1"/>
</dbReference>
<protein>
    <recommendedName>
        <fullName evidence="1">Small ribosomal subunit protein eS1</fullName>
    </recommendedName>
    <alternativeName>
        <fullName evidence="3">40S ribosomal protein S3a</fullName>
    </alternativeName>
    <alternativeName>
        <fullName>Protein cyc07</fullName>
    </alternativeName>
</protein>